<organism>
    <name type="scientific">Supella longipalpa</name>
    <name type="common">Brown-banded cockroach</name>
    <dbReference type="NCBI Taxonomy" id="83902"/>
    <lineage>
        <taxon>Eukaryota</taxon>
        <taxon>Metazoa</taxon>
        <taxon>Ecdysozoa</taxon>
        <taxon>Arthropoda</taxon>
        <taxon>Hexapoda</taxon>
        <taxon>Insecta</taxon>
        <taxon>Pterygota</taxon>
        <taxon>Neoptera</taxon>
        <taxon>Polyneoptera</taxon>
        <taxon>Dictyoptera</taxon>
        <taxon>Blattodea</taxon>
        <taxon>Blaberoidea</taxon>
        <taxon>Ectobiidae</taxon>
        <taxon>Plectopterinae</taxon>
        <taxon>Supella</taxon>
    </lineage>
</organism>
<protein>
    <recommendedName>
        <fullName evidence="3">Periviscerokinin-1</fullName>
        <shortName evidence="3">SupLo-PVK-1</shortName>
    </recommendedName>
</protein>
<proteinExistence type="evidence at protein level"/>
<name>PVK1_SUPLO</name>
<comment type="function">
    <text evidence="4">Mediates visceral muscle contractile activity (myotropic activity).</text>
</comment>
<comment type="subcellular location">
    <subcellularLocation>
        <location evidence="4">Secreted</location>
    </subcellularLocation>
</comment>
<comment type="similarity">
    <text evidence="1">Belongs to the periviscerokinin family.</text>
</comment>
<feature type="peptide" id="PRO_0000378771" description="Periviscerokinin-1" evidence="2">
    <location>
        <begin position="1"/>
        <end position="11"/>
    </location>
</feature>
<feature type="modified residue" description="Valine amide" evidence="2">
    <location>
        <position position="11"/>
    </location>
</feature>
<sequence>GSSGLIAMPRV</sequence>
<keyword id="KW-0027">Amidation</keyword>
<keyword id="KW-0903">Direct protein sequencing</keyword>
<keyword id="KW-0527">Neuropeptide</keyword>
<keyword id="KW-0964">Secreted</keyword>
<accession>P85778</accession>
<reference evidence="4" key="1">
    <citation type="journal article" date="2009" name="BMC Evol. Biol.">
        <title>A proteomic approach for studying insect phylogeny: CAPA peptides of ancient insect taxa (Dictyoptera, Blattoptera) as a test case.</title>
        <authorList>
            <person name="Roth S."/>
            <person name="Fromm B."/>
            <person name="Gaede G."/>
            <person name="Predel R."/>
        </authorList>
    </citation>
    <scope>PROTEIN SEQUENCE</scope>
    <scope>AMIDATION AT VAL-11</scope>
    <source>
        <tissue evidence="2">Abdominal perisympathetic organs</tissue>
    </source>
</reference>
<evidence type="ECO:0000255" key="1"/>
<evidence type="ECO:0000269" key="2">
    <source>
    </source>
</evidence>
<evidence type="ECO:0000303" key="3">
    <source>
    </source>
</evidence>
<evidence type="ECO:0000305" key="4"/>
<dbReference type="GO" id="GO:0005576">
    <property type="term" value="C:extracellular region"/>
    <property type="evidence" value="ECO:0007669"/>
    <property type="project" value="UniProtKB-SubCell"/>
</dbReference>
<dbReference type="GO" id="GO:0007218">
    <property type="term" value="P:neuropeptide signaling pathway"/>
    <property type="evidence" value="ECO:0007669"/>
    <property type="project" value="UniProtKB-KW"/>
</dbReference>
<dbReference type="InterPro" id="IPR013231">
    <property type="entry name" value="Periviscerokinin"/>
</dbReference>
<dbReference type="Pfam" id="PF08259">
    <property type="entry name" value="Periviscerokin"/>
    <property type="match status" value="1"/>
</dbReference>